<protein>
    <recommendedName>
        <fullName>Mannose-6-phosphate isomerase</fullName>
        <ecNumber>5.3.1.8</ecNumber>
    </recommendedName>
    <alternativeName>
        <fullName>Phosphohexomutase</fullName>
    </alternativeName>
    <alternativeName>
        <fullName>Phosphomannose isomerase</fullName>
        <shortName>PMI</shortName>
    </alternativeName>
</protein>
<accession>Q8J093</accession>
<accession>E7R1T0</accession>
<accession>W1QIL2</accession>
<reference key="1">
    <citation type="journal article" date="2002" name="Yeast">
        <title>Sequencing and functional analysis of the Hansenula polymorpha genomic fragment containing the YPT1 and PMI40 genes.</title>
        <authorList>
            <person name="Kim M.W."/>
            <person name="Agaphonov M.O."/>
            <person name="Kim J.Y."/>
            <person name="Rhee S.K."/>
            <person name="Kang H.A."/>
        </authorList>
    </citation>
    <scope>NUCLEOTIDE SEQUENCE [GENOMIC DNA]</scope>
    <source>
        <strain>ATCC 26012 / BCRC 20466 / JCM 22074 / NRRL Y-7560 / DL-1</strain>
    </source>
</reference>
<reference key="2">
    <citation type="submission" date="2001-02" db="EMBL/GenBank/DDBJ databases">
        <title>Molecular cloning of the Hansenula polymorpha homolog of the Saccharomyces cerevisiae PMI40 gene.</title>
        <authorList>
            <person name="Kim M.W."/>
            <person name="Agaphonov M.O."/>
            <person name="Rhee S.K."/>
            <person name="Kang H.A."/>
        </authorList>
    </citation>
    <scope>NUCLEOTIDE SEQUENCE [GENOMIC DNA]</scope>
    <source>
        <strain>ATCC 26012 / BCRC 20466 / JCM 22074 / NRRL Y-7560 / DL-1</strain>
    </source>
</reference>
<reference key="3">
    <citation type="journal article" date="2013" name="BMC Genomics">
        <title>Genome sequence and analysis of methylotrophic yeast Hansenula polymorpha DL1.</title>
        <authorList>
            <person name="Ravin N.V."/>
            <person name="Eldarov M.A."/>
            <person name="Kadnikov V.V."/>
            <person name="Beletsky A.V."/>
            <person name="Schneider J."/>
            <person name="Mardanova E.S."/>
            <person name="Smekalova E.M."/>
            <person name="Zvereva M.I."/>
            <person name="Dontsova O.A."/>
            <person name="Mardanov A.V."/>
            <person name="Skryabin K.G."/>
        </authorList>
    </citation>
    <scope>NUCLEOTIDE SEQUENCE [LARGE SCALE GENOMIC DNA]</scope>
    <source>
        <strain>ATCC 26012 / BCRC 20466 / JCM 22074 / NRRL Y-7560 / DL-1</strain>
    </source>
</reference>
<comment type="function">
    <text evidence="1">Involved in the synthesis of the GDP-mannose and dolichol-phosphate-mannose required for a number of critical mannosyl transfer reactions.</text>
</comment>
<comment type="catalytic activity">
    <reaction>
        <text>D-mannose 6-phosphate = D-fructose 6-phosphate</text>
        <dbReference type="Rhea" id="RHEA:12356"/>
        <dbReference type="ChEBI" id="CHEBI:58735"/>
        <dbReference type="ChEBI" id="CHEBI:61527"/>
        <dbReference type="EC" id="5.3.1.8"/>
    </reaction>
</comment>
<comment type="cofactor">
    <cofactor evidence="1">
        <name>Zn(2+)</name>
        <dbReference type="ChEBI" id="CHEBI:29105"/>
    </cofactor>
    <text evidence="1">Binds 1 zinc ion per subunit.</text>
</comment>
<comment type="pathway">
    <text>Nucleotide-sugar biosynthesis; GDP-alpha-D-mannose biosynthesis; alpha-D-mannose 1-phosphate from D-fructose 6-phosphate: step 1/2.</text>
</comment>
<comment type="subcellular location">
    <subcellularLocation>
        <location evidence="1">Cytoplasm</location>
    </subcellularLocation>
</comment>
<comment type="similarity">
    <text evidence="2">Belongs to the mannose-6-phosphate isomerase type 1 family.</text>
</comment>
<feature type="chain" id="PRO_0000194246" description="Mannose-6-phosphate isomerase">
    <location>
        <begin position="1"/>
        <end position="426"/>
    </location>
</feature>
<feature type="active site" evidence="1">
    <location>
        <position position="296"/>
    </location>
</feature>
<feature type="binding site" evidence="1">
    <location>
        <position position="112"/>
    </location>
    <ligand>
        <name>Zn(2+)</name>
        <dbReference type="ChEBI" id="CHEBI:29105"/>
    </ligand>
</feature>
<feature type="binding site" evidence="1">
    <location>
        <position position="114"/>
    </location>
    <ligand>
        <name>Zn(2+)</name>
        <dbReference type="ChEBI" id="CHEBI:29105"/>
    </ligand>
</feature>
<feature type="binding site" evidence="1">
    <location>
        <position position="139"/>
    </location>
    <ligand>
        <name>Zn(2+)</name>
        <dbReference type="ChEBI" id="CHEBI:29105"/>
    </ligand>
</feature>
<feature type="binding site" evidence="1">
    <location>
        <position position="277"/>
    </location>
    <ligand>
        <name>Zn(2+)</name>
        <dbReference type="ChEBI" id="CHEBI:29105"/>
    </ligand>
</feature>
<sequence length="426" mass="46779">MSSAPKLFRVIGGAQNYDWGKLGSTSAVARFAKLNDPENVSIEEEKPYAELWMGTHPSVPTVSAQDRTPLRDLVRAAPEEMLGQDIIDKFGSKEGIPFLFKVLSIRKVLSIQAHPDKALARQLHASDPKHYPDDNHKPEMAVAITDFEAFCGFKPLAEIDALLQKIPEFRELVGDDVVAEFHSGIDSSDVAGKKKLLQKVFSRVMNSPESKFEPLAARLVERTKSDPQLFGETLADLIQRLDAQFPNDIGLFCGCLLLNHCILKSGEAMFLEAKDPHAYISGDIMECMAASDNVIRAGFTPKFKDVEVLVDCLTYSFNPVEEQKLKPAPFPRGTGVAELKLYDPPIDEFSVLQTTFTSAGAEKFEGLDGPSLLIVTEGKGKIKLQGSDEALDASTGNIFFVAPKAAIELVSESKDTFTSYRAFCEA</sequence>
<proteinExistence type="inferred from homology"/>
<evidence type="ECO:0000250" key="1"/>
<evidence type="ECO:0000305" key="2"/>
<dbReference type="EC" id="5.3.1.8"/>
<dbReference type="EMBL" id="AF454544">
    <property type="protein sequence ID" value="AAN52529.1"/>
    <property type="molecule type" value="Genomic_DNA"/>
</dbReference>
<dbReference type="EMBL" id="AF346819">
    <property type="protein sequence ID" value="AAN64443.1"/>
    <property type="molecule type" value="Genomic_DNA"/>
</dbReference>
<dbReference type="EMBL" id="AEOI02000005">
    <property type="protein sequence ID" value="ESX01420.1"/>
    <property type="molecule type" value="Genomic_DNA"/>
</dbReference>
<dbReference type="RefSeq" id="XP_013936254.1">
    <property type="nucleotide sequence ID" value="XM_014080779.1"/>
</dbReference>
<dbReference type="SMR" id="Q8J093"/>
<dbReference type="STRING" id="871575.Q8J093"/>
<dbReference type="GeneID" id="25770283"/>
<dbReference type="KEGG" id="opa:HPODL_00814"/>
<dbReference type="eggNOG" id="KOG2757">
    <property type="taxonomic scope" value="Eukaryota"/>
</dbReference>
<dbReference type="HOGENOM" id="CLU_026967_0_0_1"/>
<dbReference type="OMA" id="DIGLFCG"/>
<dbReference type="OrthoDB" id="6605218at2759"/>
<dbReference type="UniPathway" id="UPA00126">
    <property type="reaction ID" value="UER00423"/>
</dbReference>
<dbReference type="Proteomes" id="UP000008673">
    <property type="component" value="Chromosome III"/>
</dbReference>
<dbReference type="GO" id="GO:0005829">
    <property type="term" value="C:cytosol"/>
    <property type="evidence" value="ECO:0007669"/>
    <property type="project" value="TreeGrafter"/>
</dbReference>
<dbReference type="GO" id="GO:0004476">
    <property type="term" value="F:mannose-6-phosphate isomerase activity"/>
    <property type="evidence" value="ECO:0007669"/>
    <property type="project" value="UniProtKB-EC"/>
</dbReference>
<dbReference type="GO" id="GO:0008270">
    <property type="term" value="F:zinc ion binding"/>
    <property type="evidence" value="ECO:0007669"/>
    <property type="project" value="InterPro"/>
</dbReference>
<dbReference type="GO" id="GO:0005975">
    <property type="term" value="P:carbohydrate metabolic process"/>
    <property type="evidence" value="ECO:0007669"/>
    <property type="project" value="InterPro"/>
</dbReference>
<dbReference type="GO" id="GO:0000032">
    <property type="term" value="P:cell wall mannoprotein biosynthetic process"/>
    <property type="evidence" value="ECO:0007669"/>
    <property type="project" value="EnsemblFungi"/>
</dbReference>
<dbReference type="GO" id="GO:0009298">
    <property type="term" value="P:GDP-mannose biosynthetic process"/>
    <property type="evidence" value="ECO:0007669"/>
    <property type="project" value="UniProtKB-UniPathway"/>
</dbReference>
<dbReference type="GO" id="GO:0006486">
    <property type="term" value="P:protein glycosylation"/>
    <property type="evidence" value="ECO:0007669"/>
    <property type="project" value="EnsemblFungi"/>
</dbReference>
<dbReference type="CDD" id="cd07011">
    <property type="entry name" value="cupin_PMI_type_I_N"/>
    <property type="match status" value="1"/>
</dbReference>
<dbReference type="Gene3D" id="2.60.120.10">
    <property type="entry name" value="Jelly Rolls"/>
    <property type="match status" value="2"/>
</dbReference>
<dbReference type="Gene3D" id="1.10.441.10">
    <property type="entry name" value="Phosphomannose Isomerase, domain 2"/>
    <property type="match status" value="1"/>
</dbReference>
<dbReference type="InterPro" id="IPR001250">
    <property type="entry name" value="Man6P_Isoase-1"/>
</dbReference>
<dbReference type="InterPro" id="IPR016305">
    <property type="entry name" value="Mannose-6-P_Isomerase"/>
</dbReference>
<dbReference type="InterPro" id="IPR018050">
    <property type="entry name" value="Pmannose_isomerase-type1_CS"/>
</dbReference>
<dbReference type="InterPro" id="IPR046456">
    <property type="entry name" value="PMI_typeI_C"/>
</dbReference>
<dbReference type="InterPro" id="IPR046457">
    <property type="entry name" value="PMI_typeI_cat"/>
</dbReference>
<dbReference type="InterPro" id="IPR046458">
    <property type="entry name" value="PMI_typeI_hel"/>
</dbReference>
<dbReference type="InterPro" id="IPR014710">
    <property type="entry name" value="RmlC-like_jellyroll"/>
</dbReference>
<dbReference type="InterPro" id="IPR011051">
    <property type="entry name" value="RmlC_Cupin_sf"/>
</dbReference>
<dbReference type="NCBIfam" id="TIGR00218">
    <property type="entry name" value="manA"/>
    <property type="match status" value="1"/>
</dbReference>
<dbReference type="PANTHER" id="PTHR10309">
    <property type="entry name" value="MANNOSE-6-PHOSPHATE ISOMERASE"/>
    <property type="match status" value="1"/>
</dbReference>
<dbReference type="PANTHER" id="PTHR10309:SF0">
    <property type="entry name" value="MANNOSE-6-PHOSPHATE ISOMERASE"/>
    <property type="match status" value="1"/>
</dbReference>
<dbReference type="Pfam" id="PF01238">
    <property type="entry name" value="PMI_typeI_C"/>
    <property type="match status" value="1"/>
</dbReference>
<dbReference type="Pfam" id="PF20511">
    <property type="entry name" value="PMI_typeI_cat"/>
    <property type="match status" value="1"/>
</dbReference>
<dbReference type="Pfam" id="PF20512">
    <property type="entry name" value="PMI_typeI_hel"/>
    <property type="match status" value="1"/>
</dbReference>
<dbReference type="PIRSF" id="PIRSF001480">
    <property type="entry name" value="Mannose-6-phosphate_isomerase"/>
    <property type="match status" value="1"/>
</dbReference>
<dbReference type="PRINTS" id="PR00714">
    <property type="entry name" value="MAN6PISMRASE"/>
</dbReference>
<dbReference type="SUPFAM" id="SSF51182">
    <property type="entry name" value="RmlC-like cupins"/>
    <property type="match status" value="1"/>
</dbReference>
<dbReference type="PROSITE" id="PS00965">
    <property type="entry name" value="PMI_I_1"/>
    <property type="match status" value="1"/>
</dbReference>
<dbReference type="PROSITE" id="PS00966">
    <property type="entry name" value="PMI_I_2"/>
    <property type="match status" value="1"/>
</dbReference>
<gene>
    <name type="primary">PMI40</name>
    <name type="ORF">HPODL_00814</name>
</gene>
<organism>
    <name type="scientific">Ogataea parapolymorpha (strain ATCC 26012 / BCRC 20466 / JCM 22074 / NRRL Y-7560 / DL-1)</name>
    <name type="common">Yeast</name>
    <name type="synonym">Hansenula polymorpha</name>
    <dbReference type="NCBI Taxonomy" id="871575"/>
    <lineage>
        <taxon>Eukaryota</taxon>
        <taxon>Fungi</taxon>
        <taxon>Dikarya</taxon>
        <taxon>Ascomycota</taxon>
        <taxon>Saccharomycotina</taxon>
        <taxon>Pichiomycetes</taxon>
        <taxon>Pichiales</taxon>
        <taxon>Pichiaceae</taxon>
        <taxon>Ogataea</taxon>
    </lineage>
</organism>
<name>MPI_OGAPD</name>
<keyword id="KW-0963">Cytoplasm</keyword>
<keyword id="KW-0413">Isomerase</keyword>
<keyword id="KW-0479">Metal-binding</keyword>
<keyword id="KW-1185">Reference proteome</keyword>
<keyword id="KW-0862">Zinc</keyword>